<dbReference type="EC" id="6.3.1.1" evidence="1"/>
<dbReference type="EMBL" id="CP001321">
    <property type="protein sequence ID" value="ACL33439.1"/>
    <property type="molecule type" value="Genomic_DNA"/>
</dbReference>
<dbReference type="RefSeq" id="WP_015940001.1">
    <property type="nucleotide sequence ID" value="NC_011852.1"/>
</dbReference>
<dbReference type="SMR" id="B8F7Y7"/>
<dbReference type="STRING" id="557723.HAPS_1959"/>
<dbReference type="KEGG" id="hap:HAPS_1959"/>
<dbReference type="PATRIC" id="fig|557723.8.peg.1947"/>
<dbReference type="HOGENOM" id="CLU_071543_0_0_6"/>
<dbReference type="UniPathway" id="UPA00134">
    <property type="reaction ID" value="UER00194"/>
</dbReference>
<dbReference type="Proteomes" id="UP000006743">
    <property type="component" value="Chromosome"/>
</dbReference>
<dbReference type="GO" id="GO:0005829">
    <property type="term" value="C:cytosol"/>
    <property type="evidence" value="ECO:0007669"/>
    <property type="project" value="TreeGrafter"/>
</dbReference>
<dbReference type="GO" id="GO:0004071">
    <property type="term" value="F:aspartate-ammonia ligase activity"/>
    <property type="evidence" value="ECO:0007669"/>
    <property type="project" value="UniProtKB-UniRule"/>
</dbReference>
<dbReference type="GO" id="GO:0005524">
    <property type="term" value="F:ATP binding"/>
    <property type="evidence" value="ECO:0007669"/>
    <property type="project" value="UniProtKB-UniRule"/>
</dbReference>
<dbReference type="GO" id="GO:0070981">
    <property type="term" value="P:L-asparagine biosynthetic process"/>
    <property type="evidence" value="ECO:0007669"/>
    <property type="project" value="UniProtKB-UniRule"/>
</dbReference>
<dbReference type="Gene3D" id="3.30.930.10">
    <property type="entry name" value="Bira Bifunctional Protein, Domain 2"/>
    <property type="match status" value="1"/>
</dbReference>
<dbReference type="HAMAP" id="MF_00555">
    <property type="entry name" value="AsnA"/>
    <property type="match status" value="1"/>
</dbReference>
<dbReference type="InterPro" id="IPR006195">
    <property type="entry name" value="aa-tRNA-synth_II"/>
</dbReference>
<dbReference type="InterPro" id="IPR045864">
    <property type="entry name" value="aa-tRNA-synth_II/BPL/LPL"/>
</dbReference>
<dbReference type="InterPro" id="IPR004618">
    <property type="entry name" value="AsnA"/>
</dbReference>
<dbReference type="NCBIfam" id="TIGR00669">
    <property type="entry name" value="asnA"/>
    <property type="match status" value="1"/>
</dbReference>
<dbReference type="PANTHER" id="PTHR30073">
    <property type="entry name" value="ASPARTATE--AMMONIA LIGASE"/>
    <property type="match status" value="1"/>
</dbReference>
<dbReference type="PANTHER" id="PTHR30073:SF5">
    <property type="entry name" value="ASPARTATE--AMMONIA LIGASE"/>
    <property type="match status" value="1"/>
</dbReference>
<dbReference type="Pfam" id="PF03590">
    <property type="entry name" value="AsnA"/>
    <property type="match status" value="1"/>
</dbReference>
<dbReference type="PIRSF" id="PIRSF001555">
    <property type="entry name" value="Asp_ammon_ligase"/>
    <property type="match status" value="1"/>
</dbReference>
<dbReference type="SUPFAM" id="SSF55681">
    <property type="entry name" value="Class II aaRS and biotin synthetases"/>
    <property type="match status" value="1"/>
</dbReference>
<dbReference type="PROSITE" id="PS50862">
    <property type="entry name" value="AA_TRNA_LIGASE_II"/>
    <property type="match status" value="1"/>
</dbReference>
<protein>
    <recommendedName>
        <fullName evidence="1">Aspartate--ammonia ligase</fullName>
        <ecNumber evidence="1">6.3.1.1</ecNumber>
    </recommendedName>
    <alternativeName>
        <fullName evidence="1">Asparagine synthetase A</fullName>
    </alternativeName>
</protein>
<organism>
    <name type="scientific">Glaesserella parasuis serovar 5 (strain SH0165)</name>
    <name type="common">Haemophilus parasuis</name>
    <dbReference type="NCBI Taxonomy" id="557723"/>
    <lineage>
        <taxon>Bacteria</taxon>
        <taxon>Pseudomonadati</taxon>
        <taxon>Pseudomonadota</taxon>
        <taxon>Gammaproteobacteria</taxon>
        <taxon>Pasteurellales</taxon>
        <taxon>Pasteurellaceae</taxon>
        <taxon>Glaesserella</taxon>
    </lineage>
</organism>
<proteinExistence type="inferred from homology"/>
<feature type="chain" id="PRO_1000146695" description="Aspartate--ammonia ligase">
    <location>
        <begin position="1"/>
        <end position="330"/>
    </location>
</feature>
<accession>B8F7Y7</accession>
<evidence type="ECO:0000255" key="1">
    <source>
        <dbReference type="HAMAP-Rule" id="MF_00555"/>
    </source>
</evidence>
<name>ASNA_GLAP5</name>
<sequence length="330" mass="37247">MQKSFILQQQEISFVKNTFTQNLIEQLDIIEVQGPILSEVGNGMQDNLSGIEKAVQVNVKCIPGAVYEVVHSLAKWKRHTLARFGFQEGEGLFVHMKALRPDEDSLDPTHSVYVDQWDWEKVIPAGKRNFDYLKQTVRSIYRAIRLTELAVEARFDIPSVLPKEITFVHSEDLVKRCPTLTSKERENAICKEYGAVFLIGIGGKLSDGKAHDGRAPDYDDWTTVSEGEYKGLNGDILVWNEQLGTAFELSSMGIRVDETALRLQVALTGDEDRLEMDWHKDLLAGRLPLSIGGGIGQSRMAMFLLRKKHIGEVQSSVWPKEMLAKFENIL</sequence>
<keyword id="KW-0028">Amino-acid biosynthesis</keyword>
<keyword id="KW-0061">Asparagine biosynthesis</keyword>
<keyword id="KW-0067">ATP-binding</keyword>
<keyword id="KW-0963">Cytoplasm</keyword>
<keyword id="KW-0436">Ligase</keyword>
<keyword id="KW-0547">Nucleotide-binding</keyword>
<keyword id="KW-1185">Reference proteome</keyword>
<reference key="1">
    <citation type="journal article" date="2009" name="J. Bacteriol.">
        <title>Complete genome sequence of Haemophilus parasuis SH0165.</title>
        <authorList>
            <person name="Yue M."/>
            <person name="Yang F."/>
            <person name="Yang J."/>
            <person name="Bei W."/>
            <person name="Cai X."/>
            <person name="Chen L."/>
            <person name="Dong J."/>
            <person name="Zhou R."/>
            <person name="Jin M."/>
            <person name="Jin Q."/>
            <person name="Chen H."/>
        </authorList>
    </citation>
    <scope>NUCLEOTIDE SEQUENCE [LARGE SCALE GENOMIC DNA]</scope>
    <source>
        <strain>SH0165</strain>
    </source>
</reference>
<comment type="catalytic activity">
    <reaction evidence="1">
        <text>L-aspartate + NH4(+) + ATP = L-asparagine + AMP + diphosphate + H(+)</text>
        <dbReference type="Rhea" id="RHEA:11372"/>
        <dbReference type="ChEBI" id="CHEBI:15378"/>
        <dbReference type="ChEBI" id="CHEBI:28938"/>
        <dbReference type="ChEBI" id="CHEBI:29991"/>
        <dbReference type="ChEBI" id="CHEBI:30616"/>
        <dbReference type="ChEBI" id="CHEBI:33019"/>
        <dbReference type="ChEBI" id="CHEBI:58048"/>
        <dbReference type="ChEBI" id="CHEBI:456215"/>
        <dbReference type="EC" id="6.3.1.1"/>
    </reaction>
</comment>
<comment type="pathway">
    <text evidence="1">Amino-acid biosynthesis; L-asparagine biosynthesis; L-asparagine from L-aspartate (ammonia route): step 1/1.</text>
</comment>
<comment type="subcellular location">
    <subcellularLocation>
        <location evidence="1">Cytoplasm</location>
    </subcellularLocation>
</comment>
<comment type="similarity">
    <text evidence="1">Belongs to the class-II aminoacyl-tRNA synthetase family. AsnA subfamily.</text>
</comment>
<gene>
    <name evidence="1" type="primary">asnA</name>
    <name type="ordered locus">HAPS_1959</name>
</gene>